<dbReference type="EMBL" id="BC077199">
    <property type="protein sequence ID" value="AAH77199.1"/>
    <property type="molecule type" value="mRNA"/>
</dbReference>
<dbReference type="SMR" id="Q6AZV0"/>
<dbReference type="DNASU" id="496372"/>
<dbReference type="GeneID" id="496372"/>
<dbReference type="KEGG" id="xla:496372"/>
<dbReference type="AGR" id="Xenbase:XB-GENE-5855323"/>
<dbReference type="CTD" id="496372"/>
<dbReference type="Xenbase" id="XB-GENE-5855323">
    <property type="gene designation" value="sdhd.L"/>
</dbReference>
<dbReference type="OMA" id="HHWTIER"/>
<dbReference type="OrthoDB" id="18577at2759"/>
<dbReference type="UniPathway" id="UPA00223"/>
<dbReference type="Proteomes" id="UP000186698">
    <property type="component" value="Chromosome 7L"/>
</dbReference>
<dbReference type="Bgee" id="496372">
    <property type="expression patterns" value="Expressed in heart and 19 other cell types or tissues"/>
</dbReference>
<dbReference type="GO" id="GO:0005743">
    <property type="term" value="C:mitochondrial inner membrane"/>
    <property type="evidence" value="ECO:0000250"/>
    <property type="project" value="UniProtKB"/>
</dbReference>
<dbReference type="GO" id="GO:0045273">
    <property type="term" value="C:respiratory chain complex II (succinate dehydrogenase)"/>
    <property type="evidence" value="ECO:0000250"/>
    <property type="project" value="UniProtKB"/>
</dbReference>
<dbReference type="GO" id="GO:0020037">
    <property type="term" value="F:heme binding"/>
    <property type="evidence" value="ECO:0000250"/>
    <property type="project" value="UniProtKB"/>
</dbReference>
<dbReference type="GO" id="GO:0046872">
    <property type="term" value="F:metal ion binding"/>
    <property type="evidence" value="ECO:0007669"/>
    <property type="project" value="UniProtKB-KW"/>
</dbReference>
<dbReference type="GO" id="GO:0048039">
    <property type="term" value="F:ubiquinone binding"/>
    <property type="evidence" value="ECO:0000250"/>
    <property type="project" value="UniProtKB"/>
</dbReference>
<dbReference type="GO" id="GO:0006121">
    <property type="term" value="P:mitochondrial electron transport, succinate to ubiquinone"/>
    <property type="evidence" value="ECO:0000318"/>
    <property type="project" value="GO_Central"/>
</dbReference>
<dbReference type="GO" id="GO:0006099">
    <property type="term" value="P:tricarboxylic acid cycle"/>
    <property type="evidence" value="ECO:0000318"/>
    <property type="project" value="GO_Central"/>
</dbReference>
<dbReference type="CDD" id="cd03496">
    <property type="entry name" value="SQR_TypeC_CybS"/>
    <property type="match status" value="1"/>
</dbReference>
<dbReference type="FunFam" id="1.20.1300.10:FF:000009">
    <property type="entry name" value="Succinate dehydrogenase [ubiquinone] cytochrome b small subunit, mitochondrial"/>
    <property type="match status" value="1"/>
</dbReference>
<dbReference type="Gene3D" id="1.20.1300.10">
    <property type="entry name" value="Fumarate reductase/succinate dehydrogenase, transmembrane subunit"/>
    <property type="match status" value="1"/>
</dbReference>
<dbReference type="InterPro" id="IPR007992">
    <property type="entry name" value="CybS"/>
</dbReference>
<dbReference type="InterPro" id="IPR034804">
    <property type="entry name" value="SQR/QFR_C/D"/>
</dbReference>
<dbReference type="PANTHER" id="PTHR13337">
    <property type="entry name" value="SUCCINATE DEHYDROGENASE"/>
    <property type="match status" value="1"/>
</dbReference>
<dbReference type="PANTHER" id="PTHR13337:SF2">
    <property type="entry name" value="SUCCINATE DEHYDROGENASE [UBIQUINONE] CYTOCHROME B SMALL SUBUNIT, MITOCHONDRIAL"/>
    <property type="match status" value="1"/>
</dbReference>
<dbReference type="Pfam" id="PF05328">
    <property type="entry name" value="CybS"/>
    <property type="match status" value="1"/>
</dbReference>
<dbReference type="SUPFAM" id="SSF81343">
    <property type="entry name" value="Fumarate reductase respiratory complex transmembrane subunits"/>
    <property type="match status" value="1"/>
</dbReference>
<keyword id="KW-0249">Electron transport</keyword>
<keyword id="KW-0349">Heme</keyword>
<keyword id="KW-0408">Iron</keyword>
<keyword id="KW-0472">Membrane</keyword>
<keyword id="KW-0479">Metal-binding</keyword>
<keyword id="KW-0496">Mitochondrion</keyword>
<keyword id="KW-0999">Mitochondrion inner membrane</keyword>
<keyword id="KW-1185">Reference proteome</keyword>
<keyword id="KW-0809">Transit peptide</keyword>
<keyword id="KW-0812">Transmembrane</keyword>
<keyword id="KW-1133">Transmembrane helix</keyword>
<keyword id="KW-0813">Transport</keyword>
<keyword id="KW-0816">Tricarboxylic acid cycle</keyword>
<feature type="transit peptide" description="Mitochondrion" evidence="3">
    <location>
        <begin position="1"/>
        <end position="21"/>
    </location>
</feature>
<feature type="chain" id="PRO_0000343809" description="Succinate dehydrogenase [ubiquinone] cytochrome b small subunit B, mitochondrial">
    <location>
        <begin position="22"/>
        <end position="152"/>
    </location>
</feature>
<feature type="topological domain" description="Mitochondrial matrix" evidence="1">
    <location>
        <begin position="22"/>
        <end position="56"/>
    </location>
</feature>
<feature type="transmembrane region" description="Helical" evidence="1">
    <location>
        <begin position="57"/>
        <end position="78"/>
    </location>
</feature>
<feature type="topological domain" description="Mitochondrial intermembrane" evidence="1">
    <location>
        <begin position="79"/>
        <end position="83"/>
    </location>
</feature>
<feature type="transmembrane region" description="Helical" evidence="1">
    <location>
        <begin position="84"/>
        <end position="104"/>
    </location>
</feature>
<feature type="topological domain" description="Mitochondrial matrix" evidence="1">
    <location>
        <begin position="105"/>
        <end position="113"/>
    </location>
</feature>
<feature type="transmembrane region" description="Helical" evidence="1">
    <location>
        <begin position="114"/>
        <end position="135"/>
    </location>
</feature>
<feature type="topological domain" description="Mitochondrial intermembrane" evidence="1">
    <location>
        <begin position="136"/>
        <end position="152"/>
    </location>
</feature>
<feature type="binding site" description="axial binding residue" evidence="1">
    <location>
        <position position="95"/>
    </location>
    <ligand>
        <name>heme b</name>
        <dbReference type="ChEBI" id="CHEBI:60344"/>
        <note>ligand shared with SDHC</note>
    </ligand>
    <ligandPart>
        <name>Fe</name>
        <dbReference type="ChEBI" id="CHEBI:18248"/>
    </ligandPart>
</feature>
<feature type="binding site" evidence="1">
    <location>
        <position position="107"/>
    </location>
    <ligand>
        <name>a ubiquinone</name>
        <dbReference type="ChEBI" id="CHEBI:16389"/>
        <note>ligand shared with IP/SDHB</note>
    </ligand>
</feature>
<sequence length="152" mass="16398">MATLLRVSSLCRANRASAFKSLLIRPLPCLSQDLHMVQTSQIHTSPNHHAGSKAASMHWTGERALSVALLGLLPAAYLYPGAAMDYSLAAALTLHGHWGLGQVVTDYVHGETKIKMANTSLFALSALTFAGLCYFNYHDVGICKAVAMLWSL</sequence>
<organism>
    <name type="scientific">Xenopus laevis</name>
    <name type="common">African clawed frog</name>
    <dbReference type="NCBI Taxonomy" id="8355"/>
    <lineage>
        <taxon>Eukaryota</taxon>
        <taxon>Metazoa</taxon>
        <taxon>Chordata</taxon>
        <taxon>Craniata</taxon>
        <taxon>Vertebrata</taxon>
        <taxon>Euteleostomi</taxon>
        <taxon>Amphibia</taxon>
        <taxon>Batrachia</taxon>
        <taxon>Anura</taxon>
        <taxon>Pipoidea</taxon>
        <taxon>Pipidae</taxon>
        <taxon>Xenopodinae</taxon>
        <taxon>Xenopus</taxon>
        <taxon>Xenopus</taxon>
    </lineage>
</organism>
<accession>Q6AZV0</accession>
<name>DHSDB_XENLA</name>
<reference key="1">
    <citation type="submission" date="2004-07" db="EMBL/GenBank/DDBJ databases">
        <authorList>
            <consortium name="NIH - Xenopus Gene Collection (XGC) project"/>
        </authorList>
    </citation>
    <scope>NUCLEOTIDE SEQUENCE [LARGE SCALE MRNA]</scope>
    <source>
        <tissue>Embryo</tissue>
    </source>
</reference>
<protein>
    <recommendedName>
        <fullName>Succinate dehydrogenase [ubiquinone] cytochrome b small subunit B, mitochondrial</fullName>
        <shortName>CybS-B</shortName>
    </recommendedName>
    <alternativeName>
        <fullName>Malate dehydrogenase [quinone] cytochrome b small subunit</fullName>
    </alternativeName>
    <alternativeName>
        <fullName>Succinate dehydrogenase complex subunit D-B</fullName>
    </alternativeName>
    <alternativeName>
        <fullName>Succinate-ubiquinone oxidoreductase cytochrome b small subunit B</fullName>
    </alternativeName>
    <alternativeName>
        <fullName>Succinate-ubiquinone reductase membrane anchor subunit B</fullName>
    </alternativeName>
</protein>
<proteinExistence type="evidence at transcript level"/>
<gene>
    <name type="primary">sdhd-b</name>
</gene>
<comment type="function">
    <text evidence="1 2">Membrane-anchoring subunit of succinate dehydrogenase (SDH) that is involved in complex II of the mitochondrial electron transport chain and is responsible for transferring electrons from succinate to ubiquinone (coenzyme Q) (By similarity). SDH also oxidizes malate to the non-canonical enol form of oxaloacetate, enol-oxaloacetate. Enol-oxaloacetate, which is a potent inhibitor of the succinate dehydrogenase activity, is further isomerized into keto-oxaloacetate (By similarity).</text>
</comment>
<comment type="pathway">
    <text evidence="1">Carbohydrate metabolism; tricarboxylic acid cycle.</text>
</comment>
<comment type="subunit">
    <text evidence="1">Component of complex II composed of four subunits: the flavoprotein (FP) SDHA, iron-sulfur protein (IP) SDHB, and a cytochrome b560 composed of SDHC and SDHD.</text>
</comment>
<comment type="subcellular location">
    <subcellularLocation>
        <location evidence="1">Mitochondrion inner membrane</location>
        <topology evidence="3">Multi-pass membrane protein</topology>
    </subcellularLocation>
</comment>
<comment type="similarity">
    <text evidence="4">Belongs to the CybS family.</text>
</comment>
<evidence type="ECO:0000250" key="1">
    <source>
        <dbReference type="UniProtKB" id="O14521"/>
    </source>
</evidence>
<evidence type="ECO:0000250" key="2">
    <source>
        <dbReference type="UniProtKB" id="Q95123"/>
    </source>
</evidence>
<evidence type="ECO:0000255" key="3"/>
<evidence type="ECO:0000305" key="4"/>